<proteinExistence type="inferred from homology"/>
<comment type="function">
    <text evidence="3 5">Phosphorylates phosphatidylinositol (PI) in the first committed step in the production of the second messenger inositol-1,4,5,-trisphosphate (PIP). May regulate Golgi disintegration/reorganization during mitosis, possibly via its phosphorylation (By similarity). Involved in Golgi-to-plasma membrane trafficking (By similarity). May play an important role in the inner ear development.</text>
</comment>
<comment type="catalytic activity">
    <reaction evidence="5">
        <text>a 1,2-diacyl-sn-glycero-3-phospho-(1D-myo-inositol) + ATP = a 1,2-diacyl-sn-glycero-3-phospho-(1D-myo-inositol 4-phosphate) + ADP + H(+)</text>
        <dbReference type="Rhea" id="RHEA:19877"/>
        <dbReference type="ChEBI" id="CHEBI:15378"/>
        <dbReference type="ChEBI" id="CHEBI:30616"/>
        <dbReference type="ChEBI" id="CHEBI:57880"/>
        <dbReference type="ChEBI" id="CHEBI:58178"/>
        <dbReference type="ChEBI" id="CHEBI:456216"/>
        <dbReference type="EC" id="2.7.1.67"/>
    </reaction>
    <physiologicalReaction direction="left-to-right" evidence="5">
        <dbReference type="Rhea" id="RHEA:19878"/>
    </physiologicalReaction>
</comment>
<comment type="cofactor">
    <cofactor evidence="5">
        <name>Mg(2+)</name>
        <dbReference type="ChEBI" id="CHEBI:18420"/>
    </cofactor>
    <cofactor evidence="5">
        <name>Mn(2+)</name>
        <dbReference type="ChEBI" id="CHEBI:29035"/>
    </cofactor>
</comment>
<comment type="activity regulation">
    <text evidence="2">Inhibited by wortmannin. Increased kinase activity upon interaction with NCS1/FREQ.</text>
</comment>
<comment type="subunit">
    <text evidence="3 5">Interacts with ARF1 and ARF3 in the Golgi complex, but not with ARF4, ARF5 or ARF6 (By similarity). Interacts with NCS1/FREQ in a calcium-independent manner. Interacts with CALN1/CABP8 and CALN2/CABP7; in a calcium-dependent manner; this interaction competes with NCS1/FREQ binding (By similarity). Interacts with ACBD3. Interacts with ARMH3, YWHAB, YWHAE, YWHAG, YWHAH, YWHAQ, YWHAZ and SFN (By similarity). Interacts with GGA2 (via VHS domain); the interaction is important for PI4KB location at the Golgi apparatus membrane (By similarity). Interacts with ATG9A.</text>
</comment>
<comment type="subcellular location">
    <subcellularLocation>
        <location evidence="1">Endomembrane system</location>
    </subcellularLocation>
    <subcellularLocation>
        <location evidence="1">Mitochondrion outer membrane</location>
        <topology evidence="1">Peripheral membrane protein</topology>
    </subcellularLocation>
    <subcellularLocation>
        <location evidence="1">Rough endoplasmic reticulum membrane</location>
        <topology evidence="1">Peripheral membrane protein</topology>
    </subcellularLocation>
    <subcellularLocation>
        <location evidence="1">Golgi apparatus</location>
    </subcellularLocation>
    <subcellularLocation>
        <location evidence="5">Golgi apparatus membrane</location>
    </subcellularLocation>
    <text evidence="5">Found in the outer membrane of mitochondria and membranes of the rough endoplasmic reticulum. Recruited to the Golgi complex by the small GTPase ARF to stimulate the synthesis of phosphatidylinositol 4,5-bisphosphate (PIP2) on the Golgi complex. Recruited to the Golgi apparatus membrane by ACBD3, GGA2 is also involved in the recruitment.</text>
</comment>
<comment type="similarity">
    <text evidence="9">Belongs to the PI3/PI4-kinase family. Type III PI4K subfamily.</text>
</comment>
<gene>
    <name type="primary">PI4KB</name>
    <name type="synonym">PIK4CB</name>
</gene>
<keyword id="KW-0007">Acetylation</keyword>
<keyword id="KW-0067">ATP-binding</keyword>
<keyword id="KW-0256">Endoplasmic reticulum</keyword>
<keyword id="KW-0333">Golgi apparatus</keyword>
<keyword id="KW-0418">Kinase</keyword>
<keyword id="KW-0443">Lipid metabolism</keyword>
<keyword id="KW-0472">Membrane</keyword>
<keyword id="KW-0496">Mitochondrion</keyword>
<keyword id="KW-1000">Mitochondrion outer membrane</keyword>
<keyword id="KW-0547">Nucleotide-binding</keyword>
<keyword id="KW-0597">Phosphoprotein</keyword>
<keyword id="KW-0808">Transferase</keyword>
<name>PI4KB_SORAR</name>
<protein>
    <recommendedName>
        <fullName>Phosphatidylinositol 4-kinase beta</fullName>
        <shortName>PI4K-beta</shortName>
        <shortName>PI4Kbeta</shortName>
        <shortName>PtdIns 4-kinase beta</shortName>
        <ecNumber evidence="5">2.7.1.67</ecNumber>
    </recommendedName>
</protein>
<evidence type="ECO:0000250" key="1"/>
<evidence type="ECO:0000250" key="2">
    <source>
        <dbReference type="UniProtKB" id="O02810"/>
    </source>
</evidence>
<evidence type="ECO:0000250" key="3">
    <source>
        <dbReference type="UniProtKB" id="O08561"/>
    </source>
</evidence>
<evidence type="ECO:0000250" key="4">
    <source>
        <dbReference type="UniProtKB" id="Q8BKC8"/>
    </source>
</evidence>
<evidence type="ECO:0000250" key="5">
    <source>
        <dbReference type="UniProtKB" id="Q9UBF8"/>
    </source>
</evidence>
<evidence type="ECO:0000255" key="6">
    <source>
        <dbReference type="PROSITE-ProRule" id="PRU00269"/>
    </source>
</evidence>
<evidence type="ECO:0000255" key="7">
    <source>
        <dbReference type="PROSITE-ProRule" id="PRU00878"/>
    </source>
</evidence>
<evidence type="ECO:0000256" key="8">
    <source>
        <dbReference type="SAM" id="MobiDB-lite"/>
    </source>
</evidence>
<evidence type="ECO:0000305" key="9"/>
<accession>B3EX61</accession>
<dbReference type="EC" id="2.7.1.67" evidence="5"/>
<dbReference type="EMBL" id="DP000772">
    <property type="protein sequence ID" value="ACE75819.1"/>
    <property type="molecule type" value="Genomic_DNA"/>
</dbReference>
<dbReference type="RefSeq" id="XP_004618146.1">
    <property type="nucleotide sequence ID" value="XM_004618089.2"/>
</dbReference>
<dbReference type="RefSeq" id="XP_054986347.1">
    <property type="nucleotide sequence ID" value="XM_055130372.1"/>
</dbReference>
<dbReference type="SMR" id="B3EX61"/>
<dbReference type="GeneID" id="101556829"/>
<dbReference type="KEGG" id="sara:101556829"/>
<dbReference type="CTD" id="5298"/>
<dbReference type="OrthoDB" id="10264149at2759"/>
<dbReference type="GO" id="GO:0000139">
    <property type="term" value="C:Golgi membrane"/>
    <property type="evidence" value="ECO:0007669"/>
    <property type="project" value="UniProtKB-SubCell"/>
</dbReference>
<dbReference type="GO" id="GO:0005741">
    <property type="term" value="C:mitochondrial outer membrane"/>
    <property type="evidence" value="ECO:0007669"/>
    <property type="project" value="UniProtKB-SubCell"/>
</dbReference>
<dbReference type="GO" id="GO:0030867">
    <property type="term" value="C:rough endoplasmic reticulum membrane"/>
    <property type="evidence" value="ECO:0007669"/>
    <property type="project" value="UniProtKB-SubCell"/>
</dbReference>
<dbReference type="GO" id="GO:0004430">
    <property type="term" value="F:1-phosphatidylinositol 4-kinase activity"/>
    <property type="evidence" value="ECO:0000250"/>
    <property type="project" value="UniProtKB"/>
</dbReference>
<dbReference type="GO" id="GO:0071889">
    <property type="term" value="F:14-3-3 protein binding"/>
    <property type="evidence" value="ECO:0000250"/>
    <property type="project" value="UniProtKB"/>
</dbReference>
<dbReference type="GO" id="GO:0005524">
    <property type="term" value="F:ATP binding"/>
    <property type="evidence" value="ECO:0007669"/>
    <property type="project" value="UniProtKB-KW"/>
</dbReference>
<dbReference type="GO" id="GO:0048839">
    <property type="term" value="P:inner ear development"/>
    <property type="evidence" value="ECO:0000250"/>
    <property type="project" value="UniProtKB"/>
</dbReference>
<dbReference type="GO" id="GO:0046854">
    <property type="term" value="P:phosphatidylinositol phosphate biosynthetic process"/>
    <property type="evidence" value="ECO:0007669"/>
    <property type="project" value="InterPro"/>
</dbReference>
<dbReference type="GO" id="GO:0048015">
    <property type="term" value="P:phosphatidylinositol-mediated signaling"/>
    <property type="evidence" value="ECO:0007669"/>
    <property type="project" value="TreeGrafter"/>
</dbReference>
<dbReference type="CDD" id="cd22246">
    <property type="entry name" value="PI4KB_NTD"/>
    <property type="match status" value="1"/>
</dbReference>
<dbReference type="CDD" id="cd05168">
    <property type="entry name" value="PI4Kc_III_beta"/>
    <property type="match status" value="1"/>
</dbReference>
<dbReference type="FunFam" id="3.30.1010.10:FF:000031">
    <property type="entry name" value="Phosphatidylinositol 4-kinase beta"/>
    <property type="match status" value="1"/>
</dbReference>
<dbReference type="FunFam" id="1.10.1070.11:FF:000004">
    <property type="entry name" value="Phosphatidylinositol 4-kinase, catalytic, beta"/>
    <property type="match status" value="1"/>
</dbReference>
<dbReference type="Gene3D" id="1.10.1070.11">
    <property type="entry name" value="Phosphatidylinositol 3-/4-kinase, catalytic domain"/>
    <property type="match status" value="1"/>
</dbReference>
<dbReference type="Gene3D" id="3.30.1010.10">
    <property type="entry name" value="Phosphatidylinositol 3-kinase Catalytic Subunit, Chain A, domain 4"/>
    <property type="match status" value="1"/>
</dbReference>
<dbReference type="InterPro" id="IPR011009">
    <property type="entry name" value="Kinase-like_dom_sf"/>
</dbReference>
<dbReference type="InterPro" id="IPR000403">
    <property type="entry name" value="PI3/4_kinase_cat_dom"/>
</dbReference>
<dbReference type="InterPro" id="IPR036940">
    <property type="entry name" value="PI3/4_kinase_cat_sf"/>
</dbReference>
<dbReference type="InterPro" id="IPR018936">
    <property type="entry name" value="PI3/4_kinase_CS"/>
</dbReference>
<dbReference type="InterPro" id="IPR001263">
    <property type="entry name" value="PI3K_accessory_dom"/>
</dbReference>
<dbReference type="InterPro" id="IPR049160">
    <property type="entry name" value="PI4KB-PIK1_PIK"/>
</dbReference>
<dbReference type="InterPro" id="IPR015433">
    <property type="entry name" value="PI_Kinase"/>
</dbReference>
<dbReference type="PANTHER" id="PTHR10048:SF22">
    <property type="entry name" value="PHOSPHATIDYLINOSITOL 4-KINASE BETA"/>
    <property type="match status" value="1"/>
</dbReference>
<dbReference type="PANTHER" id="PTHR10048">
    <property type="entry name" value="PHOSPHATIDYLINOSITOL KINASE"/>
    <property type="match status" value="1"/>
</dbReference>
<dbReference type="Pfam" id="PF00454">
    <property type="entry name" value="PI3_PI4_kinase"/>
    <property type="match status" value="1"/>
</dbReference>
<dbReference type="Pfam" id="PF21245">
    <property type="entry name" value="PI4KB-PIK1_PIK"/>
    <property type="match status" value="1"/>
</dbReference>
<dbReference type="SMART" id="SM00146">
    <property type="entry name" value="PI3Kc"/>
    <property type="match status" value="1"/>
</dbReference>
<dbReference type="SUPFAM" id="SSF56112">
    <property type="entry name" value="Protein kinase-like (PK-like)"/>
    <property type="match status" value="1"/>
</dbReference>
<dbReference type="PROSITE" id="PS00915">
    <property type="entry name" value="PI3_4_KINASE_1"/>
    <property type="match status" value="1"/>
</dbReference>
<dbReference type="PROSITE" id="PS00916">
    <property type="entry name" value="PI3_4_KINASE_2"/>
    <property type="match status" value="1"/>
</dbReference>
<dbReference type="PROSITE" id="PS50290">
    <property type="entry name" value="PI3_4_KINASE_3"/>
    <property type="match status" value="1"/>
</dbReference>
<dbReference type="PROSITE" id="PS51545">
    <property type="entry name" value="PIK_HELICAL"/>
    <property type="match status" value="1"/>
</dbReference>
<reference key="1">
    <citation type="submission" date="2008-06" db="EMBL/GenBank/DDBJ databases">
        <title>NISC comparative sequencing initiative.</title>
        <authorList>
            <person name="Antonellis A."/>
            <person name="Ayele K."/>
            <person name="Benjamin B."/>
            <person name="Blakesley R.W."/>
            <person name="Boakye A."/>
            <person name="Bouffard G.G."/>
            <person name="Brinkley C."/>
            <person name="Brooks S."/>
            <person name="Chu G."/>
            <person name="Coleman H."/>
            <person name="Engle J."/>
            <person name="Gestole M."/>
            <person name="Greene A."/>
            <person name="Guan X."/>
            <person name="Gupta J."/>
            <person name="Haghighi P."/>
            <person name="Han J."/>
            <person name="Hansen N."/>
            <person name="Ho S.-L."/>
            <person name="Hu P."/>
            <person name="Hunter G."/>
            <person name="Hurle B."/>
            <person name="Idol J.R."/>
            <person name="Kwong P."/>
            <person name="Laric P."/>
            <person name="Larson S."/>
            <person name="Lee-Lin S.-Q."/>
            <person name="Legaspi R."/>
            <person name="Madden M."/>
            <person name="Maduro Q.L."/>
            <person name="Maduro V.B."/>
            <person name="Margulies E.H."/>
            <person name="Masiello C."/>
            <person name="Maskeri B."/>
            <person name="McDowell J."/>
            <person name="Mojidi H.A."/>
            <person name="Mullikin J.C."/>
            <person name="Oestreicher J.S."/>
            <person name="Park M."/>
            <person name="Portnoy M.E."/>
            <person name="Prasad A."/>
            <person name="Puri O."/>
            <person name="Reddix-Dugue N."/>
            <person name="Schandler K."/>
            <person name="Schueler M.G."/>
            <person name="Sison C."/>
            <person name="Stantripop S."/>
            <person name="Stephen E."/>
            <person name="Taye A."/>
            <person name="Thomas J.W."/>
            <person name="Thomas P.J."/>
            <person name="Tsipouri V."/>
            <person name="Ung L."/>
            <person name="Vogt J.L."/>
            <person name="Wetherby K.D."/>
            <person name="Young A."/>
            <person name="Green E.D."/>
        </authorList>
    </citation>
    <scope>NUCLEOTIDE SEQUENCE [LARGE SCALE GENOMIC DNA]</scope>
</reference>
<organism>
    <name type="scientific">Sorex araneus</name>
    <name type="common">Eurasian common shrew</name>
    <name type="synonym">European shrew</name>
    <dbReference type="NCBI Taxonomy" id="42254"/>
    <lineage>
        <taxon>Eukaryota</taxon>
        <taxon>Metazoa</taxon>
        <taxon>Chordata</taxon>
        <taxon>Craniata</taxon>
        <taxon>Vertebrata</taxon>
        <taxon>Euteleostomi</taxon>
        <taxon>Mammalia</taxon>
        <taxon>Eutheria</taxon>
        <taxon>Laurasiatheria</taxon>
        <taxon>Eulipotyphla</taxon>
        <taxon>Soricidae</taxon>
        <taxon>Soricinae</taxon>
        <taxon>Sorex</taxon>
    </lineage>
</organism>
<feature type="initiator methionine" description="Removed" evidence="5">
    <location>
        <position position="1"/>
    </location>
</feature>
<feature type="chain" id="PRO_0000365168" description="Phosphatidylinositol 4-kinase beta">
    <location>
        <begin position="2"/>
        <end position="801"/>
    </location>
</feature>
<feature type="domain" description="PIK helical" evidence="7">
    <location>
        <begin position="29"/>
        <end position="242"/>
    </location>
</feature>
<feature type="domain" description="PI3K/PI4K catalytic" evidence="6">
    <location>
        <begin position="520"/>
        <end position="786"/>
    </location>
</feature>
<feature type="region of interest" description="Disordered" evidence="8">
    <location>
        <begin position="1"/>
        <end position="29"/>
    </location>
</feature>
<feature type="region of interest" description="Interaction with ACBD3" evidence="5">
    <location>
        <begin position="2"/>
        <end position="68"/>
    </location>
</feature>
<feature type="region of interest" description="Disordered" evidence="8">
    <location>
        <begin position="101"/>
        <end position="121"/>
    </location>
</feature>
<feature type="region of interest" description="Disordered" evidence="8">
    <location>
        <begin position="250"/>
        <end position="304"/>
    </location>
</feature>
<feature type="region of interest" description="G-loop" evidence="6">
    <location>
        <begin position="526"/>
        <end position="532"/>
    </location>
</feature>
<feature type="region of interest" description="Catalytic loop" evidence="6">
    <location>
        <begin position="653"/>
        <end position="661"/>
    </location>
</feature>
<feature type="region of interest" description="Activation loop" evidence="6">
    <location>
        <begin position="672"/>
        <end position="696"/>
    </location>
</feature>
<feature type="compositionally biased region" description="Polar residues" evidence="8">
    <location>
        <begin position="259"/>
        <end position="268"/>
    </location>
</feature>
<feature type="compositionally biased region" description="Low complexity" evidence="8">
    <location>
        <begin position="278"/>
        <end position="294"/>
    </location>
</feature>
<feature type="modified residue" description="N-acetylglycine" evidence="5">
    <location>
        <position position="2"/>
    </location>
</feature>
<feature type="modified residue" description="Phosphoserine" evidence="5">
    <location>
        <position position="258"/>
    </location>
</feature>
<feature type="modified residue" description="Phosphothreonine" evidence="5">
    <location>
        <position position="263"/>
    </location>
</feature>
<feature type="modified residue" description="Phosphoserine" evidence="5">
    <location>
        <position position="266"/>
    </location>
</feature>
<feature type="modified residue" description="Phosphoserine" evidence="4">
    <location>
        <position position="275"/>
    </location>
</feature>
<feature type="modified residue" description="Phosphoserine" evidence="5">
    <location>
        <position position="277"/>
    </location>
</feature>
<feature type="modified residue" description="Phosphoserine" evidence="4">
    <location>
        <position position="284"/>
    </location>
</feature>
<feature type="modified residue" description="Phosphoserine" evidence="5">
    <location>
        <position position="294"/>
    </location>
</feature>
<feature type="modified residue" description="Phosphoserine" evidence="5">
    <location>
        <position position="413"/>
    </location>
</feature>
<feature type="modified residue" description="Phosphothreonine" evidence="5">
    <location>
        <position position="423"/>
    </location>
</feature>
<feature type="modified residue" description="Phosphoserine" evidence="5">
    <location>
        <position position="496"/>
    </location>
</feature>
<feature type="modified residue" description="Phosphothreonine" evidence="5">
    <location>
        <position position="502"/>
    </location>
</feature>
<feature type="modified residue" description="Phosphothreonine" evidence="5">
    <location>
        <position position="504"/>
    </location>
</feature>
<sequence>MGDTAVEPAPLKPASEPAPGPPGNNGGSLLSVITEGVGELSVIDPEVAQKACQEVLEKVRLLHGAVAVSKRGTALELVNGDGVDTEIRCLDDPPAQIREEEDEMGATVTSGTAKGARRRRQNNSAKQSWLLRLFESKLFDISMAISYLYNSKEPGVQAYIGNRLFCFRNEDVDFYLPQLLNMYIHMDEDVGDAIKPYIVHRCRQSINFSLQCALLLGAYSSDMHISTQRHSRGTKLRKLILSDELKPAHRKRELPSLSPALNTGLSPSKRTHQRSKSDATASISLSSSLKRTASNPKVENEDEPIRLAPEREFIKSLMAIGKRLATLPTKEQKTQRLISELSLLNHKLPARVWLPTAAFDHHVVRVPHTQAVVLNSKDKAPYLIYVEVLECENFDTTNVPARIPENRIRSTRSVENLPECGITHEQRAGSFSTVPNYDNDDEAWSVDDIGELQVELPEMHTNSCDNISQFSVDSITSQESKEPVFIAAGDIRRRLSEQLAHTPTAFRRDPEDPSAVALKEPWQEKVRRIREGSPYGHLPNWRLLSVIVKCGDDLRQELLAFQVLKQLQSIWEQERVPLWIKPYKILVISADSGMIEPVVNAVSIHQVKKQSQLSLLDYFLQEHGSYTTEAFLSAQRNFVQSCAGYCLVCYLLQVKDRHNGNILLDAEGHIIHIDFGFILSSSPRNLGFETSAFKLTTEFVDVMGGLDGDMFNYYKMLMLQGLIAARKHMDKVVQIVEIMQQGSQLPCFHGSSTIRNLKERFHMNMTEEQLQLLVEQMVDGSMRSITTKLYDGFQYLTNGIM</sequence>